<keyword id="KW-0072">Autophagy</keyword>
<keyword id="KW-0968">Cytoplasmic vesicle</keyword>
<keyword id="KW-0449">Lipoprotein</keyword>
<keyword id="KW-0472">Membrane</keyword>
<keyword id="KW-0653">Protein transport</keyword>
<keyword id="KW-1185">Reference proteome</keyword>
<keyword id="KW-0813">Transport</keyword>
<keyword id="KW-0833">Ubl conjugation pathway</keyword>
<keyword id="KW-0926">Vacuole</keyword>
<name>ATG8_PICST</name>
<feature type="chain" id="PRO_0000317898" description="Autophagy-related protein 8">
    <location>
        <begin position="1"/>
        <end position="116"/>
    </location>
</feature>
<feature type="propeptide" id="PRO_0000317899" description="Removed in mature form" evidence="1">
    <location>
        <begin position="117"/>
        <end position="139"/>
    </location>
</feature>
<feature type="site" description="Cleavage; by ATG4" evidence="1">
    <location>
        <begin position="116"/>
        <end position="117"/>
    </location>
</feature>
<feature type="lipid moiety-binding region" description="Phosphatidylethanolamine amidated glycine" evidence="1">
    <location>
        <position position="116"/>
    </location>
</feature>
<dbReference type="EMBL" id="AAVQ01000001">
    <property type="protein sequence ID" value="EAZ63823.1"/>
    <property type="molecule type" value="Genomic_DNA"/>
</dbReference>
<dbReference type="RefSeq" id="XP_001387846.1">
    <property type="nucleotide sequence ID" value="XM_001387809.1"/>
</dbReference>
<dbReference type="SMR" id="A3GFU8"/>
<dbReference type="FunCoup" id="A3GFU8">
    <property type="interactions" value="587"/>
</dbReference>
<dbReference type="STRING" id="322104.A3GFU8"/>
<dbReference type="GeneID" id="4851147"/>
<dbReference type="KEGG" id="pic:PICST_34219"/>
<dbReference type="eggNOG" id="KOG1654">
    <property type="taxonomic scope" value="Eukaryota"/>
</dbReference>
<dbReference type="HOGENOM" id="CLU_119276_0_1_1"/>
<dbReference type="InParanoid" id="A3GFU8"/>
<dbReference type="OMA" id="AVYQEHK"/>
<dbReference type="OrthoDB" id="6738456at2759"/>
<dbReference type="Proteomes" id="UP000002258">
    <property type="component" value="Chromosome 1"/>
</dbReference>
<dbReference type="GO" id="GO:0000421">
    <property type="term" value="C:autophagosome membrane"/>
    <property type="evidence" value="ECO:0007669"/>
    <property type="project" value="UniProtKB-SubCell"/>
</dbReference>
<dbReference type="GO" id="GO:0031410">
    <property type="term" value="C:cytoplasmic vesicle"/>
    <property type="evidence" value="ECO:0007669"/>
    <property type="project" value="UniProtKB-KW"/>
</dbReference>
<dbReference type="GO" id="GO:0006914">
    <property type="term" value="P:autophagy"/>
    <property type="evidence" value="ECO:0007669"/>
    <property type="project" value="UniProtKB-KW"/>
</dbReference>
<dbReference type="GO" id="GO:0015031">
    <property type="term" value="P:protein transport"/>
    <property type="evidence" value="ECO:0007669"/>
    <property type="project" value="UniProtKB-KW"/>
</dbReference>
<dbReference type="CDD" id="cd16128">
    <property type="entry name" value="Ubl_ATG8"/>
    <property type="match status" value="1"/>
</dbReference>
<dbReference type="FunFam" id="3.10.20.90:FF:000010">
    <property type="entry name" value="Autophagy-related protein"/>
    <property type="match status" value="1"/>
</dbReference>
<dbReference type="Gene3D" id="3.10.20.90">
    <property type="entry name" value="Phosphatidylinositol 3-kinase Catalytic Subunit, Chain A, domain 1"/>
    <property type="match status" value="1"/>
</dbReference>
<dbReference type="InterPro" id="IPR004241">
    <property type="entry name" value="Atg8-like"/>
</dbReference>
<dbReference type="InterPro" id="IPR029071">
    <property type="entry name" value="Ubiquitin-like_domsf"/>
</dbReference>
<dbReference type="PANTHER" id="PTHR10969">
    <property type="entry name" value="MICROTUBULE-ASSOCIATED PROTEINS 1A/1B LIGHT CHAIN 3-RELATED"/>
    <property type="match status" value="1"/>
</dbReference>
<dbReference type="Pfam" id="PF02991">
    <property type="entry name" value="ATG8"/>
    <property type="match status" value="1"/>
</dbReference>
<dbReference type="SUPFAM" id="SSF54236">
    <property type="entry name" value="Ubiquitin-like"/>
    <property type="match status" value="1"/>
</dbReference>
<comment type="function">
    <text evidence="1">Ubiquitin-like modifier involved in autophagosome formation. With ATG4, mediates the delivery of the autophagosomes to the vacuole via the microtubule cytoskeleton. Required for selective autophagic degradation of the nucleus (nucleophagy) as well as for mitophagy which contributes to regulate mitochondrial quantity and quality by eliminating the mitochondria to a basal level to fulfill cellular energy requirements and preventing excess ROS production. Participates also in membrane fusion events that take place in the early secretory pathway. Also involved in endoplasmic reticulum-specific autophagic process and is essential for the survival of cells subjected to severe ER stress. The ATG8-PE conjugate mediates tethering between adjacent membranes and stimulates membrane hemifusion, leading to expansion of the autophagosomal membrane during autophagy.</text>
</comment>
<comment type="subcellular location">
    <subcellularLocation>
        <location evidence="1">Cytoplasmic vesicle</location>
        <location evidence="1">Autophagosome membrane</location>
        <topology evidence="1">Lipid-anchor</topology>
    </subcellularLocation>
    <subcellularLocation>
        <location evidence="1">Vacuole membrane</location>
        <topology evidence="1">Lipid-anchor</topology>
    </subcellularLocation>
</comment>
<comment type="PTM">
    <text evidence="1">The C-terminal 23 residues are removed by ATG4 to expose Gly-116 at the C-terminus. The c-terminal Gly is then amidated with phosphatidylethanolamine by an activating system similar to that for ubiquitin.</text>
</comment>
<comment type="similarity">
    <text evidence="2">Belongs to the ATG8 family.</text>
</comment>
<proteinExistence type="inferred from homology"/>
<organism>
    <name type="scientific">Scheffersomyces stipitis (strain ATCC 58785 / CBS 6054 / NBRC 10063 / NRRL Y-11545)</name>
    <name type="common">Yeast</name>
    <name type="synonym">Pichia stipitis</name>
    <dbReference type="NCBI Taxonomy" id="322104"/>
    <lineage>
        <taxon>Eukaryota</taxon>
        <taxon>Fungi</taxon>
        <taxon>Dikarya</taxon>
        <taxon>Ascomycota</taxon>
        <taxon>Saccharomycotina</taxon>
        <taxon>Pichiomycetes</taxon>
        <taxon>Debaryomycetaceae</taxon>
        <taxon>Scheffersomyces</taxon>
    </lineage>
</organism>
<accession>A3GFU8</accession>
<reference key="1">
    <citation type="journal article" date="2007" name="Nat. Biotechnol.">
        <title>Genome sequence of the lignocellulose-bioconverting and xylose-fermenting yeast Pichia stipitis.</title>
        <authorList>
            <person name="Jeffries T.W."/>
            <person name="Grigoriev I.V."/>
            <person name="Grimwood J."/>
            <person name="Laplaza J.M."/>
            <person name="Aerts A."/>
            <person name="Salamov A."/>
            <person name="Schmutz J."/>
            <person name="Lindquist E."/>
            <person name="Dehal P."/>
            <person name="Shapiro H."/>
            <person name="Jin Y.-S."/>
            <person name="Passoth V."/>
            <person name="Richardson P.M."/>
        </authorList>
    </citation>
    <scope>NUCLEOTIDE SEQUENCE [LARGE SCALE GENOMIC DNA]</scope>
    <source>
        <strain>ATCC 58785 / CBS 6054 / NBRC 10063 / NRRL Y-11545</strain>
    </source>
</reference>
<protein>
    <recommendedName>
        <fullName>Autophagy-related protein 8</fullName>
    </recommendedName>
    <alternativeName>
        <fullName>Autophagy-related ubiquitin-like modifier ATG8</fullName>
    </alternativeName>
</protein>
<sequence>MRSQFKDEHPFEKRQAEATRIAQRFKDRVPVICEKVENSDIPEIDKRKYLVPVDLSVGQFVYVIRKRIKLPSEKAIFIFVNDILPPTAALISTIYEEHKDEDGFLYVLYSGENTFGQKKPLDLSTIDWSDLSDLDLAQK</sequence>
<gene>
    <name type="primary">ATG8</name>
    <name type="ORF">PICST_34219</name>
</gene>
<evidence type="ECO:0000250" key="1">
    <source>
        <dbReference type="UniProtKB" id="P38182"/>
    </source>
</evidence>
<evidence type="ECO:0000305" key="2"/>